<organism>
    <name type="scientific">Bombyx mori</name>
    <name type="common">Silk moth</name>
    <dbReference type="NCBI Taxonomy" id="7091"/>
    <lineage>
        <taxon>Eukaryota</taxon>
        <taxon>Metazoa</taxon>
        <taxon>Ecdysozoa</taxon>
        <taxon>Arthropoda</taxon>
        <taxon>Hexapoda</taxon>
        <taxon>Insecta</taxon>
        <taxon>Pterygota</taxon>
        <taxon>Neoptera</taxon>
        <taxon>Endopterygota</taxon>
        <taxon>Lepidoptera</taxon>
        <taxon>Glossata</taxon>
        <taxon>Ditrysia</taxon>
        <taxon>Bombycoidea</taxon>
        <taxon>Bombycidae</taxon>
        <taxon>Bombycinae</taxon>
        <taxon>Bombyx</taxon>
    </lineage>
</organism>
<keyword id="KW-1003">Cell membrane</keyword>
<keyword id="KW-0325">Glycoprotein</keyword>
<keyword id="KW-0472">Membrane</keyword>
<keyword id="KW-1185">Reference proteome</keyword>
<keyword id="KW-0762">Sugar transport</keyword>
<keyword id="KW-0812">Transmembrane</keyword>
<keyword id="KW-1133">Transmembrane helix</keyword>
<keyword id="KW-0813">Transport</keyword>
<evidence type="ECO:0000255" key="1"/>
<evidence type="ECO:0000269" key="2">
    <source>
    </source>
</evidence>
<evidence type="ECO:0000303" key="3">
    <source>
    </source>
</evidence>
<evidence type="ECO:0000312" key="4">
    <source>
        <dbReference type="EMBL" id="BAF96744.1"/>
    </source>
</evidence>
<gene>
    <name evidence="4" type="primary">Tret1</name>
</gene>
<protein>
    <recommendedName>
        <fullName evidence="3">Facilitated trehalose transporter Tret1</fullName>
        <shortName evidence="3">BmTRET1</shortName>
    </recommendedName>
</protein>
<sequence>MEMEIKDENLRNSVPFVRQLSTDSVKTKTEYDNEDGTPYKSTTQKLFLWTQLLAAFAVSVGSMNVGFSSGYTSPAVLTMNITLDITKEEITWVGGLMPLAALVGGIVGGPLIEYLGRKKTIMGTAVPFTIGWMLIANAINVVMVFAGRVICGVCVGIVSLAFPVYIGETIQPEVRGALGLLPTAFGNTGILLAFLVGSYLDWSNLAFFGAAIPVPFFLLMILTPETPRWYVSKARVQEARKSLRWLRGKNVNIEKEMRDLTISQTESDRTGGNAFKQLFSKRYLPAVMISLGLMLFQQLTGINAVIFYAASIFQMSGSSVDENLASIIIGVVNFISTFIATMLIDRLGRKVLLYISSVAMITTLLALGAYFYLKQNHIDVTAYGWLPLACLVIYVLGFSIGFGPIPWLMLGEILPSKIRGTAASLATGFNWTCTFIVTKTFQNIIDAIYMHGTLWLFAVICIGGLLFVIFFVPETKGKSLEEIEMKLTSGSRRVRNISKQPENIC</sequence>
<proteinExistence type="evidence at protein level"/>
<accession>A9ZSY3</accession>
<feature type="chain" id="PRO_0000395540" description="Facilitated trehalose transporter Tret1">
    <location>
        <begin position="1"/>
        <end position="505"/>
    </location>
</feature>
<feature type="topological domain" description="Cytoplasmic" evidence="1">
    <location>
        <begin position="1"/>
        <end position="46"/>
    </location>
</feature>
<feature type="transmembrane region" description="Helical; Name=1" evidence="1">
    <location>
        <begin position="47"/>
        <end position="67"/>
    </location>
</feature>
<feature type="topological domain" description="Extracellular" evidence="1">
    <location>
        <begin position="68"/>
        <end position="91"/>
    </location>
</feature>
<feature type="transmembrane region" description="Helical; Name=2" evidence="1">
    <location>
        <begin position="92"/>
        <end position="112"/>
    </location>
</feature>
<feature type="topological domain" description="Cytoplasmic" evidence="1">
    <location>
        <begin position="113"/>
        <end position="124"/>
    </location>
</feature>
<feature type="transmembrane region" description="Helical; Name=3" evidence="1">
    <location>
        <begin position="125"/>
        <end position="145"/>
    </location>
</feature>
<feature type="topological domain" description="Extracellular" evidence="1">
    <location>
        <begin position="146"/>
        <end position="149"/>
    </location>
</feature>
<feature type="transmembrane region" description="Helical; Name=4" evidence="1">
    <location>
        <begin position="150"/>
        <end position="170"/>
    </location>
</feature>
<feature type="topological domain" description="Cytoplasmic" evidence="1">
    <location>
        <begin position="171"/>
        <end position="175"/>
    </location>
</feature>
<feature type="transmembrane region" description="Helical; Name=5" evidence="1">
    <location>
        <begin position="176"/>
        <end position="196"/>
    </location>
</feature>
<feature type="topological domain" description="Extracellular" evidence="1">
    <location>
        <begin position="197"/>
        <end position="201"/>
    </location>
</feature>
<feature type="transmembrane region" description="Helical; Name=6" evidence="1">
    <location>
        <begin position="202"/>
        <end position="222"/>
    </location>
</feature>
<feature type="topological domain" description="Cytoplasmic" evidence="1">
    <location>
        <begin position="223"/>
        <end position="286"/>
    </location>
</feature>
<feature type="transmembrane region" description="Helical; Name=7" evidence="1">
    <location>
        <begin position="287"/>
        <end position="307"/>
    </location>
</feature>
<feature type="topological domain" description="Extracellular" evidence="1">
    <location>
        <begin position="308"/>
        <end position="323"/>
    </location>
</feature>
<feature type="transmembrane region" description="Helical; Name=8" evidence="1">
    <location>
        <begin position="324"/>
        <end position="344"/>
    </location>
</feature>
<feature type="topological domain" description="Cytoplasmic" evidence="1">
    <location>
        <begin position="345"/>
        <end position="350"/>
    </location>
</feature>
<feature type="transmembrane region" description="Helical; Name=9" evidence="1">
    <location>
        <begin position="351"/>
        <end position="371"/>
    </location>
</feature>
<feature type="topological domain" description="Extracellular" evidence="1">
    <location>
        <begin position="372"/>
        <end position="390"/>
    </location>
</feature>
<feature type="transmembrane region" description="Helical; Name=10" evidence="1">
    <location>
        <begin position="391"/>
        <end position="411"/>
    </location>
</feature>
<feature type="topological domain" description="Cytoplasmic" evidence="1">
    <location>
        <begin position="412"/>
        <end position="419"/>
    </location>
</feature>
<feature type="transmembrane region" description="Helical; Name=11" evidence="1">
    <location>
        <begin position="420"/>
        <end position="437"/>
    </location>
</feature>
<feature type="topological domain" description="Extracellular" evidence="1">
    <location>
        <begin position="438"/>
        <end position="451"/>
    </location>
</feature>
<feature type="transmembrane region" description="Helical; Name=12" evidence="1">
    <location>
        <begin position="452"/>
        <end position="472"/>
    </location>
</feature>
<feature type="topological domain" description="Cytoplasmic" evidence="1">
    <location>
        <begin position="473"/>
        <end position="505"/>
    </location>
</feature>
<feature type="glycosylation site" description="N-linked (GlcNAc...) asparagine" evidence="1">
    <location>
        <position position="80"/>
    </location>
</feature>
<reference evidence="4" key="1">
    <citation type="journal article" date="2010" name="Insect Biochem. Mol. Biol.">
        <title>The trehalose transporter 1 gene sequence is conserved in insects and encodes proteins with different kinetic properties involved in trehalose import into peripheral tissues.</title>
        <authorList>
            <person name="Kanamori Y."/>
            <person name="Saito Y."/>
            <person name="Hagiwara-Komoda Y."/>
            <person name="Tanaka D."/>
            <person name="Mitsumasu K."/>
            <person name="Kikuta S."/>
            <person name="Watanabe M."/>
            <person name="Cornette R."/>
            <person name="Kikawada T."/>
            <person name="Okuda T."/>
        </authorList>
    </citation>
    <scope>NUCLEOTIDE SEQUENCE [MRNA]</scope>
    <scope>FUNCTION</scope>
    <scope>BIOPHYSICOCHEMICAL PROPERTIES</scope>
    <scope>SUBCELLULAR LOCATION</scope>
    <scope>TISSUE SPECIFICITY</scope>
    <source>
        <strain>p50T</strain>
    </source>
</reference>
<name>TRET1_BOMMO</name>
<dbReference type="EMBL" id="AB369550">
    <property type="protein sequence ID" value="BAF96744.1"/>
    <property type="molecule type" value="mRNA"/>
</dbReference>
<dbReference type="RefSeq" id="NP_001108344.1">
    <property type="nucleotide sequence ID" value="NM_001114872.1"/>
</dbReference>
<dbReference type="SMR" id="A9ZSY3"/>
<dbReference type="FunCoup" id="A9ZSY3">
    <property type="interactions" value="145"/>
</dbReference>
<dbReference type="STRING" id="7091.A9ZSY3"/>
<dbReference type="GlyCosmos" id="A9ZSY3">
    <property type="glycosylation" value="1 site, No reported glycans"/>
</dbReference>
<dbReference type="PaxDb" id="7091-BGIBMGA003739-TA"/>
<dbReference type="EnsemblMetazoa" id="NM_001114872.1">
    <property type="protein sequence ID" value="NP_001108344.1"/>
    <property type="gene ID" value="GeneID_100141437"/>
</dbReference>
<dbReference type="GeneID" id="100141437"/>
<dbReference type="KEGG" id="bmor:100141437"/>
<dbReference type="CTD" id="100141437"/>
<dbReference type="eggNOG" id="KOG0254">
    <property type="taxonomic scope" value="Eukaryota"/>
</dbReference>
<dbReference type="InParanoid" id="A9ZSY3"/>
<dbReference type="OrthoDB" id="6480153at2759"/>
<dbReference type="SABIO-RK" id="A9ZSY3"/>
<dbReference type="Proteomes" id="UP000005204">
    <property type="component" value="Unassembled WGS sequence"/>
</dbReference>
<dbReference type="GO" id="GO:0005886">
    <property type="term" value="C:plasma membrane"/>
    <property type="evidence" value="ECO:0000314"/>
    <property type="project" value="UniProtKB"/>
</dbReference>
<dbReference type="GO" id="GO:0051119">
    <property type="term" value="F:sugar transmembrane transporter activity"/>
    <property type="evidence" value="ECO:0007669"/>
    <property type="project" value="InterPro"/>
</dbReference>
<dbReference type="GO" id="GO:0015574">
    <property type="term" value="F:trehalose transmembrane transporter activity"/>
    <property type="evidence" value="ECO:0000314"/>
    <property type="project" value="UniProtKB"/>
</dbReference>
<dbReference type="GO" id="GO:0015771">
    <property type="term" value="P:trehalose transport"/>
    <property type="evidence" value="ECO:0000314"/>
    <property type="project" value="UniProtKB"/>
</dbReference>
<dbReference type="CDD" id="cd17358">
    <property type="entry name" value="MFS_GLUT6_8_Class3_like"/>
    <property type="match status" value="1"/>
</dbReference>
<dbReference type="FunFam" id="1.20.1250.20:FF:000055">
    <property type="entry name" value="Facilitated trehalose transporter Tret1-2 homolog"/>
    <property type="match status" value="1"/>
</dbReference>
<dbReference type="Gene3D" id="1.20.1250.20">
    <property type="entry name" value="MFS general substrate transporter like domains"/>
    <property type="match status" value="1"/>
</dbReference>
<dbReference type="InterPro" id="IPR020846">
    <property type="entry name" value="MFS_dom"/>
</dbReference>
<dbReference type="InterPro" id="IPR044775">
    <property type="entry name" value="MFS_ERD6/Tret1-like"/>
</dbReference>
<dbReference type="InterPro" id="IPR005828">
    <property type="entry name" value="MFS_sugar_transport-like"/>
</dbReference>
<dbReference type="InterPro" id="IPR036259">
    <property type="entry name" value="MFS_trans_sf"/>
</dbReference>
<dbReference type="InterPro" id="IPR050549">
    <property type="entry name" value="MFS_Trehalose_Transporter"/>
</dbReference>
<dbReference type="InterPro" id="IPR003663">
    <property type="entry name" value="Sugar/inositol_transpt"/>
</dbReference>
<dbReference type="InterPro" id="IPR005829">
    <property type="entry name" value="Sugar_transporter_CS"/>
</dbReference>
<dbReference type="NCBIfam" id="TIGR00879">
    <property type="entry name" value="SP"/>
    <property type="match status" value="1"/>
</dbReference>
<dbReference type="PANTHER" id="PTHR48021">
    <property type="match status" value="1"/>
</dbReference>
<dbReference type="PANTHER" id="PTHR48021:SF96">
    <property type="entry name" value="FACILITATED TREHALOSE TRANSPORTER TRET1-1-RELATED"/>
    <property type="match status" value="1"/>
</dbReference>
<dbReference type="Pfam" id="PF00083">
    <property type="entry name" value="Sugar_tr"/>
    <property type="match status" value="1"/>
</dbReference>
<dbReference type="PRINTS" id="PR00171">
    <property type="entry name" value="SUGRTRNSPORT"/>
</dbReference>
<dbReference type="SUPFAM" id="SSF103473">
    <property type="entry name" value="MFS general substrate transporter"/>
    <property type="match status" value="1"/>
</dbReference>
<dbReference type="PROSITE" id="PS50850">
    <property type="entry name" value="MFS"/>
    <property type="match status" value="1"/>
</dbReference>
<dbReference type="PROSITE" id="PS00216">
    <property type="entry name" value="SUGAR_TRANSPORT_1"/>
    <property type="match status" value="1"/>
</dbReference>
<dbReference type="PROSITE" id="PS00217">
    <property type="entry name" value="SUGAR_TRANSPORT_2"/>
    <property type="match status" value="1"/>
</dbReference>
<comment type="function">
    <text evidence="2">High-capacity facilitative transporter for trehalose. Does not transport maltose, sucrose or lactose. Mediates the bidirectional transfer of trehalose. Responsible for the transport of trehalose synthesized in the fat body and the incorporation of trehalose into other tissues that require a carbon source, thereby regulating trehalose levels in the hemolymph.</text>
</comment>
<comment type="biophysicochemical properties">
    <kinetics>
        <KM evidence="2">71.58 mM for trehalose</KM>
    </kinetics>
</comment>
<comment type="subcellular location">
    <subcellularLocation>
        <location evidence="2">Cell membrane</location>
        <topology evidence="1 2">Multi-pass membrane protein</topology>
    </subcellularLocation>
</comment>
<comment type="tissue specificity">
    <text evidence="2">Expressed in many larval tissues at a low level, moderate levels of expression are seen in testis and head and highest expression in muscle.</text>
</comment>
<comment type="similarity">
    <text evidence="1 2">Belongs to the major facilitator superfamily. Sugar transporter (TC 2.A.1.1) family. Trehalose transporter subfamily.</text>
</comment>